<reference key="1">
    <citation type="journal article" date="2009" name="PLoS Biol.">
        <title>Lineage-specific biology revealed by a finished genome assembly of the mouse.</title>
        <authorList>
            <person name="Church D.M."/>
            <person name="Goodstadt L."/>
            <person name="Hillier L.W."/>
            <person name="Zody M.C."/>
            <person name="Goldstein S."/>
            <person name="She X."/>
            <person name="Bult C.J."/>
            <person name="Agarwala R."/>
            <person name="Cherry J.L."/>
            <person name="DiCuccio M."/>
            <person name="Hlavina W."/>
            <person name="Kapustin Y."/>
            <person name="Meric P."/>
            <person name="Maglott D."/>
            <person name="Birtle Z."/>
            <person name="Marques A.C."/>
            <person name="Graves T."/>
            <person name="Zhou S."/>
            <person name="Teague B."/>
            <person name="Potamousis K."/>
            <person name="Churas C."/>
            <person name="Place M."/>
            <person name="Herschleb J."/>
            <person name="Runnheim R."/>
            <person name="Forrest D."/>
            <person name="Amos-Landgraf J."/>
            <person name="Schwartz D.C."/>
            <person name="Cheng Z."/>
            <person name="Lindblad-Toh K."/>
            <person name="Eichler E.E."/>
            <person name="Ponting C.P."/>
        </authorList>
    </citation>
    <scope>NUCLEOTIDE SEQUENCE [LARGE SCALE GENOMIC DNA]</scope>
    <source>
        <strain>C57BL/6J</strain>
    </source>
</reference>
<reference key="2">
    <citation type="journal article" date="2005" name="Science">
        <title>The transcriptional landscape of the mammalian genome.</title>
        <authorList>
            <person name="Carninci P."/>
            <person name="Kasukawa T."/>
            <person name="Katayama S."/>
            <person name="Gough J."/>
            <person name="Frith M.C."/>
            <person name="Maeda N."/>
            <person name="Oyama R."/>
            <person name="Ravasi T."/>
            <person name="Lenhard B."/>
            <person name="Wells C."/>
            <person name="Kodzius R."/>
            <person name="Shimokawa K."/>
            <person name="Bajic V.B."/>
            <person name="Brenner S.E."/>
            <person name="Batalov S."/>
            <person name="Forrest A.R."/>
            <person name="Zavolan M."/>
            <person name="Davis M.J."/>
            <person name="Wilming L.G."/>
            <person name="Aidinis V."/>
            <person name="Allen J.E."/>
            <person name="Ambesi-Impiombato A."/>
            <person name="Apweiler R."/>
            <person name="Aturaliya R.N."/>
            <person name="Bailey T.L."/>
            <person name="Bansal M."/>
            <person name="Baxter L."/>
            <person name="Beisel K.W."/>
            <person name="Bersano T."/>
            <person name="Bono H."/>
            <person name="Chalk A.M."/>
            <person name="Chiu K.P."/>
            <person name="Choudhary V."/>
            <person name="Christoffels A."/>
            <person name="Clutterbuck D.R."/>
            <person name="Crowe M.L."/>
            <person name="Dalla E."/>
            <person name="Dalrymple B.P."/>
            <person name="de Bono B."/>
            <person name="Della Gatta G."/>
            <person name="di Bernardo D."/>
            <person name="Down T."/>
            <person name="Engstrom P."/>
            <person name="Fagiolini M."/>
            <person name="Faulkner G."/>
            <person name="Fletcher C.F."/>
            <person name="Fukushima T."/>
            <person name="Furuno M."/>
            <person name="Futaki S."/>
            <person name="Gariboldi M."/>
            <person name="Georgii-Hemming P."/>
            <person name="Gingeras T.R."/>
            <person name="Gojobori T."/>
            <person name="Green R.E."/>
            <person name="Gustincich S."/>
            <person name="Harbers M."/>
            <person name="Hayashi Y."/>
            <person name="Hensch T.K."/>
            <person name="Hirokawa N."/>
            <person name="Hill D."/>
            <person name="Huminiecki L."/>
            <person name="Iacono M."/>
            <person name="Ikeo K."/>
            <person name="Iwama A."/>
            <person name="Ishikawa T."/>
            <person name="Jakt M."/>
            <person name="Kanapin A."/>
            <person name="Katoh M."/>
            <person name="Kawasawa Y."/>
            <person name="Kelso J."/>
            <person name="Kitamura H."/>
            <person name="Kitano H."/>
            <person name="Kollias G."/>
            <person name="Krishnan S.P."/>
            <person name="Kruger A."/>
            <person name="Kummerfeld S.K."/>
            <person name="Kurochkin I.V."/>
            <person name="Lareau L.F."/>
            <person name="Lazarevic D."/>
            <person name="Lipovich L."/>
            <person name="Liu J."/>
            <person name="Liuni S."/>
            <person name="McWilliam S."/>
            <person name="Madan Babu M."/>
            <person name="Madera M."/>
            <person name="Marchionni L."/>
            <person name="Matsuda H."/>
            <person name="Matsuzawa S."/>
            <person name="Miki H."/>
            <person name="Mignone F."/>
            <person name="Miyake S."/>
            <person name="Morris K."/>
            <person name="Mottagui-Tabar S."/>
            <person name="Mulder N."/>
            <person name="Nakano N."/>
            <person name="Nakauchi H."/>
            <person name="Ng P."/>
            <person name="Nilsson R."/>
            <person name="Nishiguchi S."/>
            <person name="Nishikawa S."/>
            <person name="Nori F."/>
            <person name="Ohara O."/>
            <person name="Okazaki Y."/>
            <person name="Orlando V."/>
            <person name="Pang K.C."/>
            <person name="Pavan W.J."/>
            <person name="Pavesi G."/>
            <person name="Pesole G."/>
            <person name="Petrovsky N."/>
            <person name="Piazza S."/>
            <person name="Reed J."/>
            <person name="Reid J.F."/>
            <person name="Ring B.Z."/>
            <person name="Ringwald M."/>
            <person name="Rost B."/>
            <person name="Ruan Y."/>
            <person name="Salzberg S.L."/>
            <person name="Sandelin A."/>
            <person name="Schneider C."/>
            <person name="Schoenbach C."/>
            <person name="Sekiguchi K."/>
            <person name="Semple C.A."/>
            <person name="Seno S."/>
            <person name="Sessa L."/>
            <person name="Sheng Y."/>
            <person name="Shibata Y."/>
            <person name="Shimada H."/>
            <person name="Shimada K."/>
            <person name="Silva D."/>
            <person name="Sinclair B."/>
            <person name="Sperling S."/>
            <person name="Stupka E."/>
            <person name="Sugiura K."/>
            <person name="Sultana R."/>
            <person name="Takenaka Y."/>
            <person name="Taki K."/>
            <person name="Tammoja K."/>
            <person name="Tan S.L."/>
            <person name="Tang S."/>
            <person name="Taylor M.S."/>
            <person name="Tegner J."/>
            <person name="Teichmann S.A."/>
            <person name="Ueda H.R."/>
            <person name="van Nimwegen E."/>
            <person name="Verardo R."/>
            <person name="Wei C.L."/>
            <person name="Yagi K."/>
            <person name="Yamanishi H."/>
            <person name="Zabarovsky E."/>
            <person name="Zhu S."/>
            <person name="Zimmer A."/>
            <person name="Hide W."/>
            <person name="Bult C."/>
            <person name="Grimmond S.M."/>
            <person name="Teasdale R.D."/>
            <person name="Liu E.T."/>
            <person name="Brusic V."/>
            <person name="Quackenbush J."/>
            <person name="Wahlestedt C."/>
            <person name="Mattick J.S."/>
            <person name="Hume D.A."/>
            <person name="Kai C."/>
            <person name="Sasaki D."/>
            <person name="Tomaru Y."/>
            <person name="Fukuda S."/>
            <person name="Kanamori-Katayama M."/>
            <person name="Suzuki M."/>
            <person name="Aoki J."/>
            <person name="Arakawa T."/>
            <person name="Iida J."/>
            <person name="Imamura K."/>
            <person name="Itoh M."/>
            <person name="Kato T."/>
            <person name="Kawaji H."/>
            <person name="Kawagashira N."/>
            <person name="Kawashima T."/>
            <person name="Kojima M."/>
            <person name="Kondo S."/>
            <person name="Konno H."/>
            <person name="Nakano K."/>
            <person name="Ninomiya N."/>
            <person name="Nishio T."/>
            <person name="Okada M."/>
            <person name="Plessy C."/>
            <person name="Shibata K."/>
            <person name="Shiraki T."/>
            <person name="Suzuki S."/>
            <person name="Tagami M."/>
            <person name="Waki K."/>
            <person name="Watahiki A."/>
            <person name="Okamura-Oho Y."/>
            <person name="Suzuki H."/>
            <person name="Kawai J."/>
            <person name="Hayashizaki Y."/>
        </authorList>
    </citation>
    <scope>NUCLEOTIDE SEQUENCE [LARGE SCALE MRNA] OF 140-258</scope>
    <source>
        <strain>C57BL/6J</strain>
        <tissue>Hippocampus</tissue>
    </source>
</reference>
<reference key="3">
    <citation type="journal article" date="2013" name="PLoS ONE">
        <title>MICU2, a paralog of MICU1, resides within the mitochondrial uniporter complex to regulate calcium handling.</title>
        <authorList>
            <person name="Plovanich M."/>
            <person name="Bogorad R.L."/>
            <person name="Sancak Y."/>
            <person name="Kamer K.J."/>
            <person name="Strittmatter L."/>
            <person name="Li A.A."/>
            <person name="Girgis H.S."/>
            <person name="Kuchimanchi S."/>
            <person name="De Groot J."/>
            <person name="Speciner L."/>
            <person name="Taneja N."/>
            <person name="Oshea J."/>
            <person name="Koteliansky V."/>
            <person name="Mootha V.K."/>
        </authorList>
    </citation>
    <scope>TISSUE SPECIFICITY</scope>
</reference>
<reference key="4">
    <citation type="journal article" date="2008" name="Cell">
        <title>A mitochondrial protein compendium elucidates complex I disease biology.</title>
        <authorList>
            <person name="Pagliarini D.J."/>
            <person name="Calvo S.E."/>
            <person name="Chang B."/>
            <person name="Sheth S.A."/>
            <person name="Vafai S.B."/>
            <person name="Ong S.E."/>
            <person name="Walford G.A."/>
            <person name="Sugiana C."/>
            <person name="Boneh A."/>
            <person name="Chen W.K."/>
            <person name="Hill D.E."/>
            <person name="Vidal M."/>
            <person name="Evans J.G."/>
            <person name="Thorburn D.R."/>
            <person name="Carr S.A."/>
            <person name="Mootha V.K."/>
        </authorList>
    </citation>
    <scope>SUBCELLULAR LOCATION</scope>
</reference>
<reference key="5">
    <citation type="journal article" date="2021" name="Cell Death Dis.">
        <title>MICU3 regulates mitochondrial Ca2+-dependent antioxidant response in skeletal muscle aging.</title>
        <authorList>
            <person name="Yang Y.F."/>
            <person name="Yang W."/>
            <person name="Liao Z.Y."/>
            <person name="Wu Y.X."/>
            <person name="Fan Z."/>
            <person name="Guo A."/>
            <person name="Yu J."/>
            <person name="Chen Q.N."/>
            <person name="Wu J.H."/>
            <person name="Zhou J."/>
            <person name="Xiao Q."/>
        </authorList>
    </citation>
    <scope>FUNCTION</scope>
    <scope>INDUCTION</scope>
</reference>
<reference key="6">
    <citation type="journal article" date="2024" name="J. Physiol. (Lond.)">
        <title>Loss of mitochondrial Ca2+ uptake protein 3 impairs skeletal muscle calcium handling and exercise capacity.</title>
        <authorList>
            <person name="Roman B."/>
            <person name="Mastoor Y."/>
            <person name="Zhang Y."/>
            <person name="Gross D."/>
            <person name="Springer D."/>
            <person name="Liu C."/>
            <person name="Glancy B."/>
            <person name="Murphy E."/>
        </authorList>
    </citation>
    <scope>FUNCTION</scope>
    <scope>INTERACTION WITH MICU1</scope>
    <scope>DISRUPTION PHENOTYPE</scope>
</reference>
<organism>
    <name type="scientific">Mus musculus</name>
    <name type="common">Mouse</name>
    <dbReference type="NCBI Taxonomy" id="10090"/>
    <lineage>
        <taxon>Eukaryota</taxon>
        <taxon>Metazoa</taxon>
        <taxon>Chordata</taxon>
        <taxon>Craniata</taxon>
        <taxon>Vertebrata</taxon>
        <taxon>Euteleostomi</taxon>
        <taxon>Mammalia</taxon>
        <taxon>Eutheria</taxon>
        <taxon>Euarchontoglires</taxon>
        <taxon>Glires</taxon>
        <taxon>Rodentia</taxon>
        <taxon>Myomorpha</taxon>
        <taxon>Muroidea</taxon>
        <taxon>Muridae</taxon>
        <taxon>Murinae</taxon>
        <taxon>Mus</taxon>
        <taxon>Mus</taxon>
    </lineage>
</organism>
<evidence type="ECO:0000250" key="1">
    <source>
        <dbReference type="UniProtKB" id="Q86XE3"/>
    </source>
</evidence>
<evidence type="ECO:0000250" key="2">
    <source>
        <dbReference type="UniProtKB" id="Q8IYU8"/>
    </source>
</evidence>
<evidence type="ECO:0000255" key="3"/>
<evidence type="ECO:0000255" key="4">
    <source>
        <dbReference type="PROSITE-ProRule" id="PRU00448"/>
    </source>
</evidence>
<evidence type="ECO:0000269" key="5">
    <source>
    </source>
</evidence>
<evidence type="ECO:0000269" key="6">
    <source>
    </source>
</evidence>
<evidence type="ECO:0000269" key="7">
    <source>
    </source>
</evidence>
<evidence type="ECO:0000303" key="8">
    <source>
    </source>
</evidence>
<evidence type="ECO:0000305" key="9"/>
<evidence type="ECO:0000305" key="10">
    <source>
    </source>
</evidence>
<evidence type="ECO:0000312" key="11">
    <source>
        <dbReference type="MGI" id="MGI:1925756"/>
    </source>
</evidence>
<feature type="transit peptide" description="Mitochondrion" evidence="3">
    <location>
        <begin position="1"/>
        <end position="6"/>
    </location>
</feature>
<feature type="chain" id="PRO_0000251231" description="Calcium uptake protein 3, mitochondrial" evidence="3">
    <location>
        <begin position="7"/>
        <end position="523"/>
    </location>
</feature>
<feature type="domain" description="EF-hand 1" evidence="4">
    <location>
        <begin position="226"/>
        <end position="261"/>
    </location>
</feature>
<feature type="domain" description="EF-hand 2; degenerate" evidence="4">
    <location>
        <begin position="395"/>
        <end position="430"/>
    </location>
</feature>
<feature type="domain" description="EF-hand 3" evidence="4">
    <location>
        <begin position="464"/>
        <end position="499"/>
    </location>
</feature>
<feature type="binding site" evidence="1">
    <location>
        <position position="238"/>
    </location>
    <ligand>
        <name>Ca(2+)</name>
        <dbReference type="ChEBI" id="CHEBI:29108"/>
        <label>1</label>
    </ligand>
</feature>
<feature type="binding site" evidence="1">
    <location>
        <position position="240"/>
    </location>
    <ligand>
        <name>Ca(2+)</name>
        <dbReference type="ChEBI" id="CHEBI:29108"/>
        <label>1</label>
    </ligand>
</feature>
<feature type="binding site" evidence="1">
    <location>
        <position position="242"/>
    </location>
    <ligand>
        <name>Ca(2+)</name>
        <dbReference type="ChEBI" id="CHEBI:29108"/>
        <label>1</label>
    </ligand>
</feature>
<feature type="binding site" evidence="1">
    <location>
        <position position="244"/>
    </location>
    <ligand>
        <name>Ca(2+)</name>
        <dbReference type="ChEBI" id="CHEBI:29108"/>
        <label>1</label>
    </ligand>
</feature>
<feature type="binding site" evidence="1">
    <location>
        <position position="246"/>
    </location>
    <ligand>
        <name>Ca(2+)</name>
        <dbReference type="ChEBI" id="CHEBI:29108"/>
        <label>1</label>
    </ligand>
</feature>
<feature type="binding site" evidence="1">
    <location>
        <position position="249"/>
    </location>
    <ligand>
        <name>Ca(2+)</name>
        <dbReference type="ChEBI" id="CHEBI:29108"/>
        <label>1</label>
    </ligand>
</feature>
<feature type="binding site" evidence="1">
    <location>
        <position position="476"/>
    </location>
    <ligand>
        <name>Ca(2+)</name>
        <dbReference type="ChEBI" id="CHEBI:29108"/>
        <label>2</label>
    </ligand>
</feature>
<feature type="binding site" evidence="1">
    <location>
        <position position="478"/>
    </location>
    <ligand>
        <name>Ca(2+)</name>
        <dbReference type="ChEBI" id="CHEBI:29108"/>
        <label>2</label>
    </ligand>
</feature>
<feature type="binding site" evidence="1">
    <location>
        <position position="480"/>
    </location>
    <ligand>
        <name>Ca(2+)</name>
        <dbReference type="ChEBI" id="CHEBI:29108"/>
        <label>2</label>
    </ligand>
</feature>
<feature type="binding site" evidence="1">
    <location>
        <position position="482"/>
    </location>
    <ligand>
        <name>Ca(2+)</name>
        <dbReference type="ChEBI" id="CHEBI:29108"/>
        <label>2</label>
    </ligand>
</feature>
<feature type="binding site" evidence="1">
    <location>
        <position position="487"/>
    </location>
    <ligand>
        <name>Ca(2+)</name>
        <dbReference type="ChEBI" id="CHEBI:29108"/>
        <label>2</label>
    </ligand>
</feature>
<feature type="disulfide bond" description="Interchain (with C-465 in MICU1)" evidence="1">
    <location>
        <position position="515"/>
    </location>
</feature>
<dbReference type="EMBL" id="AC102680">
    <property type="status" value="NOT_ANNOTATED_CDS"/>
    <property type="molecule type" value="Genomic_DNA"/>
</dbReference>
<dbReference type="EMBL" id="AC160537">
    <property type="status" value="NOT_ANNOTATED_CDS"/>
    <property type="molecule type" value="Genomic_DNA"/>
</dbReference>
<dbReference type="EMBL" id="AK019353">
    <property type="protein sequence ID" value="BAB31674.1"/>
    <property type="status" value="ALT_INIT"/>
    <property type="molecule type" value="mRNA"/>
</dbReference>
<dbReference type="CCDS" id="CCDS52545.1"/>
<dbReference type="RefSeq" id="NP_084386.1">
    <property type="nucleotide sequence ID" value="NM_030110.2"/>
</dbReference>
<dbReference type="SMR" id="Q9CTY5"/>
<dbReference type="BioGRID" id="219445">
    <property type="interactions" value="5"/>
</dbReference>
<dbReference type="FunCoup" id="Q9CTY5">
    <property type="interactions" value="197"/>
</dbReference>
<dbReference type="IntAct" id="Q9CTY5">
    <property type="interactions" value="1"/>
</dbReference>
<dbReference type="MINT" id="Q9CTY5"/>
<dbReference type="STRING" id="10090.ENSMUSP00000070241"/>
<dbReference type="GlyGen" id="Q9CTY5">
    <property type="glycosylation" value="1 site, 1 O-linked glycan (1 site)"/>
</dbReference>
<dbReference type="iPTMnet" id="Q9CTY5"/>
<dbReference type="PhosphoSitePlus" id="Q9CTY5"/>
<dbReference type="SwissPalm" id="Q9CTY5"/>
<dbReference type="PaxDb" id="10090-ENSMUSP00000070241"/>
<dbReference type="PeptideAtlas" id="Q9CTY5"/>
<dbReference type="ProteomicsDB" id="252563"/>
<dbReference type="Antibodypedia" id="8886">
    <property type="antibodies" value="55 antibodies from 16 providers"/>
</dbReference>
<dbReference type="Ensembl" id="ENSMUST00000068999.14">
    <property type="protein sequence ID" value="ENSMUSP00000070241.8"/>
    <property type="gene ID" value="ENSMUSG00000039478.16"/>
</dbReference>
<dbReference type="GeneID" id="78506"/>
<dbReference type="KEGG" id="mmu:78506"/>
<dbReference type="UCSC" id="uc009lmm.2">
    <property type="organism name" value="mouse"/>
</dbReference>
<dbReference type="AGR" id="MGI:1925756"/>
<dbReference type="CTD" id="286097"/>
<dbReference type="MGI" id="MGI:1925756">
    <property type="gene designation" value="Micu3"/>
</dbReference>
<dbReference type="VEuPathDB" id="HostDB:ENSMUSG00000039478"/>
<dbReference type="eggNOG" id="KOG2643">
    <property type="taxonomic scope" value="Eukaryota"/>
</dbReference>
<dbReference type="GeneTree" id="ENSGT00950000183079"/>
<dbReference type="HOGENOM" id="CLU_027103_0_2_1"/>
<dbReference type="InParanoid" id="Q9CTY5"/>
<dbReference type="OMA" id="DEPAYPM"/>
<dbReference type="OrthoDB" id="5859791at2759"/>
<dbReference type="PhylomeDB" id="Q9CTY5"/>
<dbReference type="TreeFam" id="TF320374"/>
<dbReference type="Reactome" id="R-MMU-8949215">
    <property type="pathway name" value="Mitochondrial calcium ion transport"/>
</dbReference>
<dbReference type="Reactome" id="R-MMU-8949664">
    <property type="pathway name" value="Processing of SMDT1"/>
</dbReference>
<dbReference type="BioGRID-ORCS" id="78506">
    <property type="hits" value="4 hits in 79 CRISPR screens"/>
</dbReference>
<dbReference type="CD-CODE" id="CE726F99">
    <property type="entry name" value="Postsynaptic density"/>
</dbReference>
<dbReference type="PRO" id="PR:Q9CTY5"/>
<dbReference type="Proteomes" id="UP000000589">
    <property type="component" value="Chromosome 8"/>
</dbReference>
<dbReference type="RNAct" id="Q9CTY5">
    <property type="molecule type" value="protein"/>
</dbReference>
<dbReference type="Bgee" id="ENSMUSG00000039478">
    <property type="expression patterns" value="Expressed in ventromedial nucleus of hypothalamus and 222 other cell types or tissues"/>
</dbReference>
<dbReference type="ExpressionAtlas" id="Q9CTY5">
    <property type="expression patterns" value="baseline and differential"/>
</dbReference>
<dbReference type="GO" id="GO:0005743">
    <property type="term" value="C:mitochondrial inner membrane"/>
    <property type="evidence" value="ECO:0007669"/>
    <property type="project" value="UniProtKB-SubCell"/>
</dbReference>
<dbReference type="GO" id="GO:0005758">
    <property type="term" value="C:mitochondrial intermembrane space"/>
    <property type="evidence" value="ECO:0007669"/>
    <property type="project" value="UniProtKB-SubCell"/>
</dbReference>
<dbReference type="GO" id="GO:0005739">
    <property type="term" value="C:mitochondrion"/>
    <property type="evidence" value="ECO:0000314"/>
    <property type="project" value="UniProtKB"/>
</dbReference>
<dbReference type="GO" id="GO:0005246">
    <property type="term" value="F:calcium channel regulator activity"/>
    <property type="evidence" value="ECO:0007669"/>
    <property type="project" value="Ensembl"/>
</dbReference>
<dbReference type="GO" id="GO:0005509">
    <property type="term" value="F:calcium ion binding"/>
    <property type="evidence" value="ECO:0007669"/>
    <property type="project" value="InterPro"/>
</dbReference>
<dbReference type="GO" id="GO:0061891">
    <property type="term" value="F:calcium ion sensor activity"/>
    <property type="evidence" value="ECO:0000250"/>
    <property type="project" value="UniProtKB"/>
</dbReference>
<dbReference type="GO" id="GO:0046982">
    <property type="term" value="F:protein heterodimerization activity"/>
    <property type="evidence" value="ECO:0000353"/>
    <property type="project" value="UniProtKB"/>
</dbReference>
<dbReference type="GO" id="GO:0036444">
    <property type="term" value="P:calcium import into the mitochondrion"/>
    <property type="evidence" value="ECO:0000315"/>
    <property type="project" value="UniProtKB"/>
</dbReference>
<dbReference type="GO" id="GO:0071277">
    <property type="term" value="P:cellular response to calcium ion"/>
    <property type="evidence" value="ECO:0007669"/>
    <property type="project" value="Ensembl"/>
</dbReference>
<dbReference type="GO" id="GO:0001956">
    <property type="term" value="P:positive regulation of neurotransmitter secretion"/>
    <property type="evidence" value="ECO:0000250"/>
    <property type="project" value="UniProtKB"/>
</dbReference>
<dbReference type="CDD" id="cd16175">
    <property type="entry name" value="EFh_MICU3"/>
    <property type="match status" value="1"/>
</dbReference>
<dbReference type="FunFam" id="1.10.238.10:FF:000149">
    <property type="entry name" value="Mitochondrial calcium uptake family member 3"/>
    <property type="match status" value="1"/>
</dbReference>
<dbReference type="Gene3D" id="1.10.238.10">
    <property type="entry name" value="EF-hand"/>
    <property type="match status" value="2"/>
</dbReference>
<dbReference type="InterPro" id="IPR011992">
    <property type="entry name" value="EF-hand-dom_pair"/>
</dbReference>
<dbReference type="InterPro" id="IPR018247">
    <property type="entry name" value="EF_Hand_1_Ca_BS"/>
</dbReference>
<dbReference type="InterPro" id="IPR002048">
    <property type="entry name" value="EF_hand_dom"/>
</dbReference>
<dbReference type="InterPro" id="IPR039800">
    <property type="entry name" value="MICU1/2/3"/>
</dbReference>
<dbReference type="PANTHER" id="PTHR12294:SF10">
    <property type="entry name" value="CALCIUM UPTAKE PROTEIN 3, MITOCHONDRIAL"/>
    <property type="match status" value="1"/>
</dbReference>
<dbReference type="PANTHER" id="PTHR12294">
    <property type="entry name" value="EF HAND DOMAIN FAMILY A1,A2-RELATED"/>
    <property type="match status" value="1"/>
</dbReference>
<dbReference type="Pfam" id="PF13499">
    <property type="entry name" value="EF-hand_7"/>
    <property type="match status" value="1"/>
</dbReference>
<dbReference type="SMART" id="SM00054">
    <property type="entry name" value="EFh"/>
    <property type="match status" value="2"/>
</dbReference>
<dbReference type="SUPFAM" id="SSF47473">
    <property type="entry name" value="EF-hand"/>
    <property type="match status" value="2"/>
</dbReference>
<dbReference type="PROSITE" id="PS00018">
    <property type="entry name" value="EF_HAND_1"/>
    <property type="match status" value="1"/>
</dbReference>
<dbReference type="PROSITE" id="PS50222">
    <property type="entry name" value="EF_HAND_2"/>
    <property type="match status" value="3"/>
</dbReference>
<accession>Q9CTY5</accession>
<proteinExistence type="evidence at protein level"/>
<sequence>MAALRRFLWPPPRLSPALAPQQPFLSPWGRPAGTAPGMSGRPFSCREEDEGAVAEAAWRRRRWGELSIAAAAGGGLVGLVCYQLYGDPRADPSELAAPELEDPPRGRGLLPIPVAAAKETVATGRAITEDLDLYATSRERRFRLFASIECEGQLFMTPYDFILAVTTDEPKFAKTWKSLSKQELSQMLSETPPVWKGSSKLFRNLKERGVISYTEYLFLLCILTKPHAGFRIAFNMFDTDGNEMVDKKEFLVLQEIFRKKNEKRETKGDEEKRAMLRLQLYGYHSPTNSVLKTDAGELVSRSYWDTLRRSTSQALFSDLAERADDITSLVADTTLLVHFFGKKGKAELNFEDFYRFMDNLQTEVLEIEFLSYSNGMNTISEEDFAHILLRYTNVENTSVFLENVRYSISEEKGITFDEFRSFFQFLNNLEDFAIALNMYNFASRSIGQDEFKRAVYVATGLKLSPHLVNTVFKIFDVDKDDQLSYKEFIGIMKDRLHRGFRGYKTVQKYPTFKSCLKKELHSR</sequence>
<protein>
    <recommendedName>
        <fullName evidence="9">Calcium uptake protein 3, mitochondrial</fullName>
    </recommendedName>
    <alternativeName>
        <fullName>EF-hand domain-containing family member A2</fullName>
    </alternativeName>
</protein>
<keyword id="KW-0106">Calcium</keyword>
<keyword id="KW-1015">Disulfide bond</keyword>
<keyword id="KW-0472">Membrane</keyword>
<keyword id="KW-0479">Metal-binding</keyword>
<keyword id="KW-0496">Mitochondrion</keyword>
<keyword id="KW-0999">Mitochondrion inner membrane</keyword>
<keyword id="KW-1185">Reference proteome</keyword>
<keyword id="KW-0677">Repeat</keyword>
<keyword id="KW-0809">Transit peptide</keyword>
<name>MICU3_MOUSE</name>
<comment type="function">
    <text evidence="1 6 7">Tissue-specific calcium sensor of the mitochondrial calcium uniporter (MCU) channel, which specifically regulates MCU channel activity in the central nervous system and skeletal muscle (PubMed:38018177). Senses calcium level via its EF-hand domains: compared to MICU1 and MICU2, MICU3 has a higher affinity for calcium (By similarity). MICU1 and MICU3 form a disulfide-linked heterodimer that stimulates and inhibits MCU activity, depending on the concentration of calcium (By similarity). At low calcium levels, MICU1 occludes the pore of the MCU channel, preventing mitochondrial calcium uptake (By similarity). At higher calcium levels, calcium-binding to MICU1 and MICU3 induces a conformational change that weakens MCU-MICU1 interactions and moves the MICU1-MICU3 heterodimer away from the pore, allowing calcium permeation through the MCU channel (By similarity). The high calcium affinity of MICU3 lowers the calcium threshold necessary for calcium permeation through the MCU channel (By similarity). The MICU1-MICU3 heterodimer promotes flexibility of neurotransmission in neuronal cells by enhancing mitochondrial calcium uptake in presynapses (By similarity). It is also required to increase mitochondrial calcium uptake in skeletal muscle cells, thereby increasing ATP production (PubMed:34845191, PubMed:38018177).</text>
</comment>
<comment type="subunit">
    <text evidence="2 7">Heterodimer; disulfide-linked; heterodimerizes with MICU1 (PubMed:38018177). Heterodimerizes with isoform 3 of MICU1 (MICU1.1) in skeletal muscle (PubMed:38018177). Component of the uniplex complex, composed of MCU, EMRE/SMDT1, MICU1 and MICU3 in a 4:4:1:1 stoichiometry (By similarity).</text>
</comment>
<comment type="subcellular location">
    <subcellularLocation>
        <location evidence="10">Mitochondrion intermembrane space</location>
    </subcellularLocation>
    <subcellularLocation>
        <location evidence="2">Mitochondrion inner membrane</location>
    </subcellularLocation>
    <text evidence="2">Recruited to the mitochondrial inner membrane via its association with the uniplex complex.</text>
</comment>
<comment type="tissue specificity">
    <text evidence="5">Predominantly expressed in skeletal muscle and central nervous system.</text>
</comment>
<comment type="induction">
    <text evidence="6">Down-regulated in skeletal muscle from aged mice.</text>
</comment>
<comment type="domain">
    <text evidence="1">EF-hand domains 1 and 3 have high affinity for calcium and act as sensors of mitochondrial matrix calcium levels. EF-hand domain 2 is degenerate.</text>
</comment>
<comment type="disruption phenotype">
    <text evidence="7">Mice show impaired exercise capacity (PubMed:38018177). Skeletal muscles display changes in the force response and fatigue, characterized by a significantly increased maximal force of the muscle and an altered fiber type composition with an increase in the ratio of type IIb (low oxidative capacity) to type IIa (high oxidative capacity) fibers (PubMed:38018177).</text>
</comment>
<comment type="similarity">
    <text evidence="9">Belongs to the MICU1 family. MICU3 subfamily.</text>
</comment>
<comment type="sequence caution" evidence="9">
    <conflict type="erroneous initiation">
        <sequence resource="EMBL-CDS" id="BAB31674"/>
    </conflict>
    <text>Truncated N-terminus.</text>
</comment>
<gene>
    <name evidence="8 11" type="primary">Micu3</name>
    <name type="synonym">Efha2</name>
</gene>